<sequence length="1273" mass="141514">MVSMLPKADAATGVIRKSYAQLPEVVNVPNLIEMQLQSFVWFQEEGLRELIEEISPIKDFVGNRLELEFIGYEFREPRLSEYECTQRDQTYSVPLYVKARLIVKTTGEIKEPFDLFFGDIPLMTALGTFITSGTERVVVSQLLRSPGVYFTISDDPATGRPLCHTNLIPSRGAWLEFETSNRDVISVKIDGRRKIPVSTLLRAIGYSDDLDILNLFEVIDNDPERHYIQSSIDRDPLIKDEISALIDIYSRLRPGDPPNADNARKLINEMFFDPQHYDLGKVGRYKVNRRLELPSREVGENRALTREDIVAIIQRIIMVNNGQDTPDDIDHLGNRRIRTVGELVQNQFRIGLVRLERVARERMSIVNLEMVTPSALVNIRPVVSAVKEFFGGSQLSQFMDQTNPLAEITNKRRLSAMGPGGLSRERAGFDVRDVHYSHYGRICPIETPEGPNIGLIGSLATYSRINRYGFVETPYRKVYSKLKNNDKKLVGLKLKTEISEKGKVLAAAGSTISEDSFKIISKLPECDISVMPFVSAEVKYMPADEEDRYIIAQANTRLDEKGYFLDDRIEARSAERYVVEPPDKIDYMDVSPKQIFSVAASLIPFLEHDDANRALMGANMQRQAVPLLRAEAPMVATGMEREAARYSGQVIFAKHAGVASSVTSEKIIIRTAEGGHDEYLLKKFVRTNQGTCINQHAIINKGQKIAAGQVLADSSATENGELALGQNCVVAFMSWQGFNYEDAIILSERLVREDAFTSIHITKHELEARDTKLGVEEITRDIPNVGEESLRELDEDGIIRIGAEVGPDDILVGKITPKGETELSAEEKLLRAIFGEKAREVKDTSLRMPHGEWGKVINVRIFSRDSGDDLPARVNKWVQVWVAQKRKVSVGDKLAGRHGNKGVISIIAPVEDMPYLPDGTPVDVVLNPIGVPSRMNLGQILETHLGWAGHLLGFRVATPVFDGADDTVIEDALARSWLSAKAGAIDMSPENKRPSADAHKAIEWIKQQGFDGKKIFDEKHPGLAKEVSLKLWLKDMGVDASALSGAELEKKAYDVSSQSRLPSPIVGKSVLRDGRTGETFDQPVTVGNMYILKLIHLVEDKVHARATGPYSLISQQPLGGKAQFGGQRFGEMEVWAMYAYGTAHNLQEMLTIKSDDIAGRAKAYESIVKGEDVLQPGVPESFKVLVKELQSLGLAVEVINEEVKIAPSEKVSSLNEGNLPASDEISAEILPETLYANTEDISEDSMMSVIDADDQDLVVSSNDEEVSENDERS</sequence>
<organism>
    <name type="scientific">Dehalococcoides mccartyi (strain ATCC BAA-2100 / JCM 16839 / KCTC 5957 / BAV1)</name>
    <dbReference type="NCBI Taxonomy" id="216389"/>
    <lineage>
        <taxon>Bacteria</taxon>
        <taxon>Bacillati</taxon>
        <taxon>Chloroflexota</taxon>
        <taxon>Dehalococcoidia</taxon>
        <taxon>Dehalococcoidales</taxon>
        <taxon>Dehalococcoidaceae</taxon>
        <taxon>Dehalococcoides</taxon>
    </lineage>
</organism>
<name>RPOB_DEHMB</name>
<comment type="function">
    <text evidence="1">DNA-dependent RNA polymerase catalyzes the transcription of DNA into RNA using the four ribonucleoside triphosphates as substrates.</text>
</comment>
<comment type="catalytic activity">
    <reaction evidence="1">
        <text>RNA(n) + a ribonucleoside 5'-triphosphate = RNA(n+1) + diphosphate</text>
        <dbReference type="Rhea" id="RHEA:21248"/>
        <dbReference type="Rhea" id="RHEA-COMP:14527"/>
        <dbReference type="Rhea" id="RHEA-COMP:17342"/>
        <dbReference type="ChEBI" id="CHEBI:33019"/>
        <dbReference type="ChEBI" id="CHEBI:61557"/>
        <dbReference type="ChEBI" id="CHEBI:140395"/>
        <dbReference type="EC" id="2.7.7.6"/>
    </reaction>
</comment>
<comment type="subunit">
    <text evidence="1">The RNAP catalytic core consists of 2 alpha, 1 beta, 1 beta' and 1 omega subunit. When a sigma factor is associated with the core the holoenzyme is formed, which can initiate transcription.</text>
</comment>
<comment type="similarity">
    <text evidence="1">Belongs to the RNA polymerase beta chain family.</text>
</comment>
<comment type="sequence caution" evidence="3">
    <conflict type="erroneous initiation">
        <sequence resource="EMBL-CDS" id="ABQ17163"/>
    </conflict>
</comment>
<protein>
    <recommendedName>
        <fullName evidence="1">DNA-directed RNA polymerase subunit beta</fullName>
        <shortName evidence="1">RNAP subunit beta</shortName>
        <ecNumber evidence="1">2.7.7.6</ecNumber>
    </recommendedName>
    <alternativeName>
        <fullName evidence="1">RNA polymerase subunit beta</fullName>
    </alternativeName>
    <alternativeName>
        <fullName evidence="1">Transcriptase subunit beta</fullName>
    </alternativeName>
</protein>
<keyword id="KW-0240">DNA-directed RNA polymerase</keyword>
<keyword id="KW-0548">Nucleotidyltransferase</keyword>
<keyword id="KW-0804">Transcription</keyword>
<keyword id="KW-0808">Transferase</keyword>
<accession>A5FRK5</accession>
<dbReference type="EC" id="2.7.7.6" evidence="1"/>
<dbReference type="EMBL" id="CP000688">
    <property type="protein sequence ID" value="ABQ17163.1"/>
    <property type="status" value="ALT_INIT"/>
    <property type="molecule type" value="Genomic_DNA"/>
</dbReference>
<dbReference type="SMR" id="A5FRK5"/>
<dbReference type="KEGG" id="deb:DehaBAV1_0578"/>
<dbReference type="PATRIC" id="fig|216389.18.peg.624"/>
<dbReference type="HOGENOM" id="CLU_000524_4_3_0"/>
<dbReference type="GO" id="GO:0000428">
    <property type="term" value="C:DNA-directed RNA polymerase complex"/>
    <property type="evidence" value="ECO:0007669"/>
    <property type="project" value="UniProtKB-KW"/>
</dbReference>
<dbReference type="GO" id="GO:0003677">
    <property type="term" value="F:DNA binding"/>
    <property type="evidence" value="ECO:0007669"/>
    <property type="project" value="UniProtKB-UniRule"/>
</dbReference>
<dbReference type="GO" id="GO:0003899">
    <property type="term" value="F:DNA-directed RNA polymerase activity"/>
    <property type="evidence" value="ECO:0007669"/>
    <property type="project" value="UniProtKB-UniRule"/>
</dbReference>
<dbReference type="GO" id="GO:0032549">
    <property type="term" value="F:ribonucleoside binding"/>
    <property type="evidence" value="ECO:0007669"/>
    <property type="project" value="InterPro"/>
</dbReference>
<dbReference type="GO" id="GO:0006351">
    <property type="term" value="P:DNA-templated transcription"/>
    <property type="evidence" value="ECO:0007669"/>
    <property type="project" value="UniProtKB-UniRule"/>
</dbReference>
<dbReference type="CDD" id="cd00653">
    <property type="entry name" value="RNA_pol_B_RPB2"/>
    <property type="match status" value="1"/>
</dbReference>
<dbReference type="Gene3D" id="2.40.50.100">
    <property type="match status" value="1"/>
</dbReference>
<dbReference type="Gene3D" id="3.90.1100.10">
    <property type="match status" value="2"/>
</dbReference>
<dbReference type="Gene3D" id="2.30.150.10">
    <property type="entry name" value="DNA-directed RNA polymerase, beta subunit, external 1 domain"/>
    <property type="match status" value="1"/>
</dbReference>
<dbReference type="Gene3D" id="2.40.270.10">
    <property type="entry name" value="DNA-directed RNA polymerase, subunit 2, domain 6"/>
    <property type="match status" value="2"/>
</dbReference>
<dbReference type="Gene3D" id="3.90.1800.10">
    <property type="entry name" value="RNA polymerase alpha subunit dimerisation domain"/>
    <property type="match status" value="1"/>
</dbReference>
<dbReference type="Gene3D" id="3.90.1110.10">
    <property type="entry name" value="RNA polymerase Rpb2, domain 2"/>
    <property type="match status" value="1"/>
</dbReference>
<dbReference type="HAMAP" id="MF_01321">
    <property type="entry name" value="RNApol_bact_RpoB"/>
    <property type="match status" value="1"/>
</dbReference>
<dbReference type="InterPro" id="IPR042107">
    <property type="entry name" value="DNA-dir_RNA_pol_bsu_ext_1_sf"/>
</dbReference>
<dbReference type="InterPro" id="IPR019462">
    <property type="entry name" value="DNA-dir_RNA_pol_bsu_external_1"/>
</dbReference>
<dbReference type="InterPro" id="IPR015712">
    <property type="entry name" value="DNA-dir_RNA_pol_su2"/>
</dbReference>
<dbReference type="InterPro" id="IPR007120">
    <property type="entry name" value="DNA-dir_RNAP_su2_dom"/>
</dbReference>
<dbReference type="InterPro" id="IPR037033">
    <property type="entry name" value="DNA-dir_RNAP_su2_hyb_sf"/>
</dbReference>
<dbReference type="InterPro" id="IPR010243">
    <property type="entry name" value="RNA_pol_bsu_bac"/>
</dbReference>
<dbReference type="InterPro" id="IPR007121">
    <property type="entry name" value="RNA_pol_bsu_CS"/>
</dbReference>
<dbReference type="InterPro" id="IPR007644">
    <property type="entry name" value="RNA_pol_bsu_protrusion"/>
</dbReference>
<dbReference type="InterPro" id="IPR007642">
    <property type="entry name" value="RNA_pol_Rpb2_2"/>
</dbReference>
<dbReference type="InterPro" id="IPR037034">
    <property type="entry name" value="RNA_pol_Rpb2_2_sf"/>
</dbReference>
<dbReference type="InterPro" id="IPR007645">
    <property type="entry name" value="RNA_pol_Rpb2_3"/>
</dbReference>
<dbReference type="InterPro" id="IPR007641">
    <property type="entry name" value="RNA_pol_Rpb2_7"/>
</dbReference>
<dbReference type="NCBIfam" id="NF001616">
    <property type="entry name" value="PRK00405.1"/>
    <property type="match status" value="1"/>
</dbReference>
<dbReference type="PANTHER" id="PTHR20856">
    <property type="entry name" value="DNA-DIRECTED RNA POLYMERASE I SUBUNIT 2"/>
    <property type="match status" value="1"/>
</dbReference>
<dbReference type="Pfam" id="PF04563">
    <property type="entry name" value="RNA_pol_Rpb2_1"/>
    <property type="match status" value="1"/>
</dbReference>
<dbReference type="Pfam" id="PF04561">
    <property type="entry name" value="RNA_pol_Rpb2_2"/>
    <property type="match status" value="1"/>
</dbReference>
<dbReference type="Pfam" id="PF04565">
    <property type="entry name" value="RNA_pol_Rpb2_3"/>
    <property type="match status" value="1"/>
</dbReference>
<dbReference type="Pfam" id="PF10385">
    <property type="entry name" value="RNA_pol_Rpb2_45"/>
    <property type="match status" value="1"/>
</dbReference>
<dbReference type="Pfam" id="PF00562">
    <property type="entry name" value="RNA_pol_Rpb2_6"/>
    <property type="match status" value="1"/>
</dbReference>
<dbReference type="Pfam" id="PF04560">
    <property type="entry name" value="RNA_pol_Rpb2_7"/>
    <property type="match status" value="1"/>
</dbReference>
<dbReference type="SUPFAM" id="SSF64484">
    <property type="entry name" value="beta and beta-prime subunits of DNA dependent RNA-polymerase"/>
    <property type="match status" value="1"/>
</dbReference>
<dbReference type="PROSITE" id="PS01166">
    <property type="entry name" value="RNA_POL_BETA"/>
    <property type="match status" value="1"/>
</dbReference>
<feature type="chain" id="PRO_0000329174" description="DNA-directed RNA polymerase subunit beta">
    <location>
        <begin position="1"/>
        <end position="1273"/>
    </location>
</feature>
<feature type="region of interest" description="Disordered" evidence="2">
    <location>
        <begin position="1252"/>
        <end position="1273"/>
    </location>
</feature>
<evidence type="ECO:0000255" key="1">
    <source>
        <dbReference type="HAMAP-Rule" id="MF_01321"/>
    </source>
</evidence>
<evidence type="ECO:0000256" key="2">
    <source>
        <dbReference type="SAM" id="MobiDB-lite"/>
    </source>
</evidence>
<evidence type="ECO:0000305" key="3"/>
<proteinExistence type="inferred from homology"/>
<gene>
    <name evidence="1" type="primary">rpoB</name>
    <name type="ordered locus">DehaBAV1_0578</name>
</gene>
<reference key="1">
    <citation type="submission" date="2007-05" db="EMBL/GenBank/DDBJ databases">
        <title>Complete sequence of Dehalococcoides sp. BAV1.</title>
        <authorList>
            <consortium name="US DOE Joint Genome Institute"/>
            <person name="Copeland A."/>
            <person name="Lucas S."/>
            <person name="Lapidus A."/>
            <person name="Barry K."/>
            <person name="Detter J.C."/>
            <person name="Glavina del Rio T."/>
            <person name="Hammon N."/>
            <person name="Israni S."/>
            <person name="Pitluck S."/>
            <person name="Lowry S."/>
            <person name="Clum A."/>
            <person name="Schmutz J."/>
            <person name="Larimer F."/>
            <person name="Land M."/>
            <person name="Hauser L."/>
            <person name="Kyrpides N."/>
            <person name="Kim E."/>
            <person name="Ritalahti K.M."/>
            <person name="Loeffler F."/>
            <person name="Richardson P."/>
        </authorList>
    </citation>
    <scope>NUCLEOTIDE SEQUENCE [LARGE SCALE GENOMIC DNA]</scope>
    <source>
        <strain>ATCC BAA-2100 / JCM 16839 / KCTC 5957 / BAV1</strain>
    </source>
</reference>